<organism>
    <name type="scientific">Loxosceles cf. spinulosa (strain GJB-2008)</name>
    <name type="common">Recluse spider</name>
    <dbReference type="NCBI Taxonomy" id="575952"/>
    <lineage>
        <taxon>Eukaryota</taxon>
        <taxon>Metazoa</taxon>
        <taxon>Ecdysozoa</taxon>
        <taxon>Arthropoda</taxon>
        <taxon>Chelicerata</taxon>
        <taxon>Arachnida</taxon>
        <taxon>Araneae</taxon>
        <taxon>Araneomorphae</taxon>
        <taxon>Haplogynae</taxon>
        <taxon>Scytodoidea</taxon>
        <taxon>Sicariidae</taxon>
        <taxon>Loxosceles</taxon>
    </lineage>
</organism>
<comment type="function">
    <text evidence="1 3">Dermonecrotic toxins cleave the phosphodiester linkage between the phosphate and headgroup of certain phospholipids (sphingolipid and lysolipid substrates), forming an alcohol (often choline) and a cyclic phosphate (By similarity). This toxin acts on sphingomyelin (SM) (By similarity). It may also act on ceramide phosphoethanolamine (CPE), lysophosphatidylcholine (LPC) and lysophosphatidylethanolamine (LPE), but not on lysophosphatidylserine (LPS), and lysophosphatidylglycerol (LPG) (By similarity). It acts by transphosphatidylation, releasing exclusively cyclic phosphate products as second products (By similarity). Induces dermonecrosis, hemolysis, increased vascular permeability, edema, inflammatory response, and platelet aggregation (By similarity).</text>
</comment>
<comment type="catalytic activity">
    <reaction evidence="1">
        <text>an N-(acyl)-sphingosylphosphocholine = an N-(acyl)-sphingosyl-1,3-cyclic phosphate + choline</text>
        <dbReference type="Rhea" id="RHEA:60652"/>
        <dbReference type="ChEBI" id="CHEBI:15354"/>
        <dbReference type="ChEBI" id="CHEBI:64583"/>
        <dbReference type="ChEBI" id="CHEBI:143892"/>
    </reaction>
</comment>
<comment type="catalytic activity">
    <reaction evidence="1">
        <text>an N-(acyl)-sphingosylphosphoethanolamine = an N-(acyl)-sphingosyl-1,3-cyclic phosphate + ethanolamine</text>
        <dbReference type="Rhea" id="RHEA:60648"/>
        <dbReference type="ChEBI" id="CHEBI:57603"/>
        <dbReference type="ChEBI" id="CHEBI:143891"/>
        <dbReference type="ChEBI" id="CHEBI:143892"/>
    </reaction>
</comment>
<comment type="catalytic activity">
    <reaction evidence="1">
        <text>a 1-acyl-sn-glycero-3-phosphocholine = a 1-acyl-sn-glycero-2,3-cyclic phosphate + choline</text>
        <dbReference type="Rhea" id="RHEA:60700"/>
        <dbReference type="ChEBI" id="CHEBI:15354"/>
        <dbReference type="ChEBI" id="CHEBI:58168"/>
        <dbReference type="ChEBI" id="CHEBI:143947"/>
    </reaction>
</comment>
<comment type="catalytic activity">
    <reaction evidence="1">
        <text>a 1-acyl-sn-glycero-3-phosphoethanolamine = a 1-acyl-sn-glycero-2,3-cyclic phosphate + ethanolamine</text>
        <dbReference type="Rhea" id="RHEA:60704"/>
        <dbReference type="ChEBI" id="CHEBI:57603"/>
        <dbReference type="ChEBI" id="CHEBI:64381"/>
        <dbReference type="ChEBI" id="CHEBI:143947"/>
    </reaction>
</comment>
<comment type="cofactor">
    <cofactor evidence="5">
        <name>Mg(2+)</name>
        <dbReference type="ChEBI" id="CHEBI:18420"/>
    </cofactor>
    <text evidence="5">Binds 1 Mg(2+) ion per subunit.</text>
</comment>
<comment type="subcellular location">
    <subcellularLocation>
        <location evidence="9">Secreted</location>
    </subcellularLocation>
</comment>
<comment type="tissue specificity">
    <text evidence="9">Expressed by the venom gland.</text>
</comment>
<comment type="similarity">
    <text evidence="8">Belongs to the arthropod phospholipase D family. Class II subfamily.</text>
</comment>
<comment type="caution">
    <text evidence="1 2 4">The most common activity assay for dermonecrotic toxins detects enzymatic activity by monitoring choline release from substrate. Liberation of choline from sphingomyelin (SM) or lysophosphatidylcholine (LPC) is commonly assumed to result from substrate hydrolysis, giving either ceramide-1-phosphate (C1P) or lysophosphatidic acid (LPA), respectively, as a second product. However, two studies from Lajoie and colleagues (2013 and 2015) report the observation of exclusive formation of cyclic phosphate products as second products, resulting from intramolecular transphosphatidylation. Cyclic phosphates have vastly different biological properties from their monoester counterparts, and they may be relevant to the pathology of brown spider envenomation.</text>
</comment>
<dbReference type="EC" id="4.6.1.-" evidence="4"/>
<dbReference type="EMBL" id="FJ171475">
    <property type="protein sequence ID" value="ACN48971.1"/>
    <property type="molecule type" value="mRNA"/>
</dbReference>
<dbReference type="SMR" id="C0JB40"/>
<dbReference type="GO" id="GO:0005576">
    <property type="term" value="C:extracellular region"/>
    <property type="evidence" value="ECO:0007669"/>
    <property type="project" value="UniProtKB-SubCell"/>
</dbReference>
<dbReference type="GO" id="GO:0016829">
    <property type="term" value="F:lyase activity"/>
    <property type="evidence" value="ECO:0007669"/>
    <property type="project" value="UniProtKB-KW"/>
</dbReference>
<dbReference type="GO" id="GO:0046872">
    <property type="term" value="F:metal ion binding"/>
    <property type="evidence" value="ECO:0007669"/>
    <property type="project" value="UniProtKB-KW"/>
</dbReference>
<dbReference type="GO" id="GO:0008081">
    <property type="term" value="F:phosphoric diester hydrolase activity"/>
    <property type="evidence" value="ECO:0007669"/>
    <property type="project" value="InterPro"/>
</dbReference>
<dbReference type="GO" id="GO:0090729">
    <property type="term" value="F:toxin activity"/>
    <property type="evidence" value="ECO:0007669"/>
    <property type="project" value="UniProtKB-KW"/>
</dbReference>
<dbReference type="GO" id="GO:0031640">
    <property type="term" value="P:killing of cells of another organism"/>
    <property type="evidence" value="ECO:0007669"/>
    <property type="project" value="UniProtKB-KW"/>
</dbReference>
<dbReference type="GO" id="GO:0016042">
    <property type="term" value="P:lipid catabolic process"/>
    <property type="evidence" value="ECO:0007669"/>
    <property type="project" value="UniProtKB-KW"/>
</dbReference>
<dbReference type="CDD" id="cd08576">
    <property type="entry name" value="GDPD_like_SMaseD_PLD"/>
    <property type="match status" value="1"/>
</dbReference>
<dbReference type="Gene3D" id="3.20.20.190">
    <property type="entry name" value="Phosphatidylinositol (PI) phosphodiesterase"/>
    <property type="match status" value="1"/>
</dbReference>
<dbReference type="InterPro" id="IPR017946">
    <property type="entry name" value="PLC-like_Pdiesterase_TIM-brl"/>
</dbReference>
<dbReference type="Pfam" id="PF13653">
    <property type="entry name" value="GDPD_2"/>
    <property type="match status" value="1"/>
</dbReference>
<dbReference type="SUPFAM" id="SSF51695">
    <property type="entry name" value="PLC-like phosphodiesterases"/>
    <property type="match status" value="1"/>
</dbReference>
<proteinExistence type="evidence at transcript level"/>
<accession>C0JB40</accession>
<feature type="chain" id="PRO_0000392854" description="Dermonecrotic toxin LcsSicTox-betaIC1">
    <location>
        <begin position="1" status="less than"/>
        <end position="274"/>
    </location>
</feature>
<feature type="active site" evidence="5">
    <location>
        <position position="5"/>
    </location>
</feature>
<feature type="active site" description="Nucleophile" evidence="5">
    <location>
        <position position="41"/>
    </location>
</feature>
<feature type="binding site" evidence="5">
    <location>
        <position position="25"/>
    </location>
    <ligand>
        <name>Mg(2+)</name>
        <dbReference type="ChEBI" id="CHEBI:18420"/>
    </ligand>
</feature>
<feature type="binding site" evidence="5">
    <location>
        <position position="27"/>
    </location>
    <ligand>
        <name>Mg(2+)</name>
        <dbReference type="ChEBI" id="CHEBI:18420"/>
    </ligand>
</feature>
<feature type="binding site" evidence="5">
    <location>
        <position position="85"/>
    </location>
    <ligand>
        <name>Mg(2+)</name>
        <dbReference type="ChEBI" id="CHEBI:18420"/>
    </ligand>
</feature>
<feature type="glycosylation site" description="N-linked (GlcNAc...) asparagine" evidence="6">
    <location>
        <position position="66"/>
    </location>
</feature>
<feature type="disulfide bond" evidence="3">
    <location>
        <begin position="45"/>
        <end position="51"/>
    </location>
</feature>
<feature type="disulfide bond" evidence="3">
    <location>
        <begin position="47"/>
        <end position="190"/>
    </location>
</feature>
<feature type="non-terminal residue">
    <location>
        <position position="1"/>
    </location>
</feature>
<protein>
    <recommendedName>
        <fullName evidence="7">Dermonecrotic toxin LcsSicTox-betaIC1</fullName>
        <ecNumber evidence="4">4.6.1.-</ecNumber>
    </recommendedName>
    <alternativeName>
        <fullName>Phospholipase D</fullName>
        <shortName>PLD</shortName>
    </alternativeName>
    <alternativeName>
        <fullName>Sphingomyelin phosphodiesterase D-like</fullName>
        <shortName>SMD-like</shortName>
        <shortName>SMase D-like</shortName>
        <shortName>Sphingomyelinase D-like</shortName>
    </alternativeName>
</protein>
<evidence type="ECO:0000250" key="1">
    <source>
        <dbReference type="UniProtKB" id="A0A0D4WTV1"/>
    </source>
</evidence>
<evidence type="ECO:0000250" key="2">
    <source>
        <dbReference type="UniProtKB" id="A0A0D4WV12"/>
    </source>
</evidence>
<evidence type="ECO:0000250" key="3">
    <source>
        <dbReference type="UniProtKB" id="P0CE80"/>
    </source>
</evidence>
<evidence type="ECO:0000250" key="4">
    <source>
        <dbReference type="UniProtKB" id="Q4ZFU2"/>
    </source>
</evidence>
<evidence type="ECO:0000250" key="5">
    <source>
        <dbReference type="UniProtKB" id="Q8I914"/>
    </source>
</evidence>
<evidence type="ECO:0000255" key="6"/>
<evidence type="ECO:0000303" key="7">
    <source>
    </source>
</evidence>
<evidence type="ECO:0000305" key="8"/>
<evidence type="ECO:0000305" key="9">
    <source>
    </source>
</evidence>
<name>B1O_LOXCS</name>
<reference key="1">
    <citation type="journal article" date="2009" name="Mol. Biol. Evol.">
        <title>Molecular evolution, functional variation, and proposed nomenclature of the gene family that includes sphingomyelinase D in sicariid spider venoms.</title>
        <authorList>
            <person name="Binford G.J."/>
            <person name="Bodner M.R."/>
            <person name="Cordes M.H."/>
            <person name="Baldwin K.L."/>
            <person name="Rynerson M.R."/>
            <person name="Burns S.N."/>
            <person name="Zobel-Thropp P.A."/>
        </authorList>
    </citation>
    <scope>NUCLEOTIDE SEQUENCE [MRNA]</scope>
    <scope>NOMENCLATURE</scope>
    <source>
        <tissue>Venom gland</tissue>
    </source>
</reference>
<keyword id="KW-0204">Cytolysis</keyword>
<keyword id="KW-1061">Dermonecrotic toxin</keyword>
<keyword id="KW-1015">Disulfide bond</keyword>
<keyword id="KW-0325">Glycoprotein</keyword>
<keyword id="KW-0354">Hemolysis</keyword>
<keyword id="KW-0442">Lipid degradation</keyword>
<keyword id="KW-0443">Lipid metabolism</keyword>
<keyword id="KW-0456">Lyase</keyword>
<keyword id="KW-0460">Magnesium</keyword>
<keyword id="KW-0479">Metal-binding</keyword>
<keyword id="KW-0964">Secreted</keyword>
<keyword id="KW-0800">Toxin</keyword>
<sequence>WIMGHMVNDISLVDEYLNQGANSLELDVSFNSEGIAEKLYHGYPCDCLRSCTKTVAFSTYLDYIRNITTPGDPKFRNELVLLMLDLKLKQIAPEAAYWAGFDTAEKLLDYYWQNGQSGARAYIILSIEILTHYEFVTGFKHQLQNKGHEEYSAKIGWDFSGNENLEEIHKVMSDLDLKEHIWQGDGITNCLPRGDDRLKEALFRRNTDWYKYIDKVYTWSIDKKSSIRNALRLGVDGVMTNYPERVVEVLQEPEFSSKLRLATYEDDPWARTVL</sequence>